<proteinExistence type="evidence at protein level"/>
<feature type="chain" id="PRO_0000079725" description="50 kDa cell wall protein">
    <location>
        <begin position="1"/>
        <end position="10" status="greater than"/>
    </location>
</feature>
<feature type="non-terminal residue" evidence="2">
    <location>
        <position position="10"/>
    </location>
</feature>
<evidence type="ECO:0000269" key="1">
    <source>
    </source>
</evidence>
<evidence type="ECO:0000303" key="2">
    <source>
    </source>
</evidence>
<evidence type="ECO:0000305" key="3"/>
<reference evidence="3" key="1">
    <citation type="journal article" date="2001" name="Planta">
        <title>Proteomic analysis reveals a novel set of cell wall proteins in a transformed tobacco cell culture that synthesises secondary walls as determined by biochemical and morphological parameters.</title>
        <authorList>
            <person name="Blee K.A."/>
            <person name="Wheatley E.R."/>
            <person name="Bonham V.A."/>
            <person name="Mitchell G.P."/>
            <person name="Robertson D."/>
            <person name="Slabas A.R."/>
            <person name="Burrell M.M."/>
            <person name="Wojtaszek P."/>
            <person name="Bolwell G.P."/>
        </authorList>
    </citation>
    <scope>PROTEIN SEQUENCE</scope>
    <scope>SUBCELLULAR LOCATION</scope>
    <source>
        <strain evidence="1">cv. Petit Havana</strain>
    </source>
</reference>
<comment type="subcellular location">
    <subcellularLocation>
        <location evidence="1">Secreted</location>
        <location evidence="1">Cell wall</location>
    </subcellularLocation>
</comment>
<keyword id="KW-0134">Cell wall</keyword>
<keyword id="KW-0903">Direct protein sequencing</keyword>
<keyword id="KW-1185">Reference proteome</keyword>
<keyword id="KW-0964">Secreted</keyword>
<accession>P82443</accession>
<organism>
    <name type="scientific">Nicotiana tabacum</name>
    <name type="common">Common tobacco</name>
    <dbReference type="NCBI Taxonomy" id="4097"/>
    <lineage>
        <taxon>Eukaryota</taxon>
        <taxon>Viridiplantae</taxon>
        <taxon>Streptophyta</taxon>
        <taxon>Embryophyta</taxon>
        <taxon>Tracheophyta</taxon>
        <taxon>Spermatophyta</taxon>
        <taxon>Magnoliopsida</taxon>
        <taxon>eudicotyledons</taxon>
        <taxon>Gunneridae</taxon>
        <taxon>Pentapetalae</taxon>
        <taxon>asterids</taxon>
        <taxon>lamiids</taxon>
        <taxon>Solanales</taxon>
        <taxon>Solanaceae</taxon>
        <taxon>Nicotianoideae</taxon>
        <taxon>Nicotianeae</taxon>
        <taxon>Nicotiana</taxon>
    </lineage>
</organism>
<dbReference type="PaxDb" id="4097-P82443"/>
<dbReference type="Proteomes" id="UP000084051">
    <property type="component" value="Unplaced"/>
</dbReference>
<dbReference type="GO" id="GO:0005576">
    <property type="term" value="C:extracellular region"/>
    <property type="evidence" value="ECO:0007669"/>
    <property type="project" value="UniProtKB-KW"/>
</dbReference>
<protein>
    <recommendedName>
        <fullName>50 kDa cell wall protein</fullName>
    </recommendedName>
</protein>
<sequence>TPHYXRFTWT</sequence>
<name>CWP35_TOBAC</name>